<evidence type="ECO:0000255" key="1">
    <source>
        <dbReference type="HAMAP-Rule" id="MF_00736"/>
    </source>
</evidence>
<evidence type="ECO:0000305" key="2"/>
<proteinExistence type="inferred from homology"/>
<protein>
    <recommendedName>
        <fullName evidence="1">Large ribosomal subunit protein uL11</fullName>
    </recommendedName>
    <alternativeName>
        <fullName evidence="2">50S ribosomal protein L11</fullName>
    </alternativeName>
</protein>
<reference key="1">
    <citation type="journal article" date="2003" name="Proc. Natl. Acad. Sci. U.S.A.">
        <title>The complete genome sequence of the carcinogenic bacterium Helicobacter hepaticus.</title>
        <authorList>
            <person name="Suerbaum S."/>
            <person name="Josenhans C."/>
            <person name="Sterzenbach T."/>
            <person name="Drescher B."/>
            <person name="Brandt P."/>
            <person name="Bell M."/>
            <person name="Droege M."/>
            <person name="Fartmann B."/>
            <person name="Fischer H.-P."/>
            <person name="Ge Z."/>
            <person name="Hoerster A."/>
            <person name="Holland R."/>
            <person name="Klein K."/>
            <person name="Koenig J."/>
            <person name="Macko L."/>
            <person name="Mendz G.L."/>
            <person name="Nyakatura G."/>
            <person name="Schauer D.B."/>
            <person name="Shen Z."/>
            <person name="Weber J."/>
            <person name="Frosch M."/>
            <person name="Fox J.G."/>
        </authorList>
    </citation>
    <scope>NUCLEOTIDE SEQUENCE [LARGE SCALE GENOMIC DNA]</scope>
    <source>
        <strain>ATCC 51449 / 3B1</strain>
    </source>
</reference>
<name>RL11_HELHP</name>
<sequence>MGKKVVGELKLQIPAGKANPSPPVGPALGQRSVNIMEFCKAFNERTKDMGDFNIPVIITIYQDKSFTFITKKPPVTDLIKKAAKITKGSDNPLKNKVGKLTSKQLEEIAQTKMEDLNASDIEAAKKIVAGSARSMGIEIQD</sequence>
<feature type="chain" id="PRO_0000104295" description="Large ribosomal subunit protein uL11">
    <location>
        <begin position="1"/>
        <end position="141"/>
    </location>
</feature>
<accession>Q7VJ78</accession>
<comment type="function">
    <text evidence="1">Forms part of the ribosomal stalk which helps the ribosome interact with GTP-bound translation factors.</text>
</comment>
<comment type="subunit">
    <text evidence="1">Part of the ribosomal stalk of the 50S ribosomal subunit. Interacts with L10 and the large rRNA to form the base of the stalk. L10 forms an elongated spine to which L12 dimers bind in a sequential fashion forming a multimeric L10(L12)X complex.</text>
</comment>
<comment type="PTM">
    <text evidence="1">One or more lysine residues are methylated.</text>
</comment>
<comment type="similarity">
    <text evidence="1">Belongs to the universal ribosomal protein uL11 family.</text>
</comment>
<keyword id="KW-0488">Methylation</keyword>
<keyword id="KW-1185">Reference proteome</keyword>
<keyword id="KW-0687">Ribonucleoprotein</keyword>
<keyword id="KW-0689">Ribosomal protein</keyword>
<keyword id="KW-0694">RNA-binding</keyword>
<keyword id="KW-0699">rRNA-binding</keyword>
<gene>
    <name evidence="1" type="primary">rplK</name>
    <name type="ordered locus">HH_0365</name>
</gene>
<dbReference type="EMBL" id="AE017125">
    <property type="protein sequence ID" value="AAP76962.1"/>
    <property type="molecule type" value="Genomic_DNA"/>
</dbReference>
<dbReference type="RefSeq" id="WP_011115208.1">
    <property type="nucleotide sequence ID" value="NC_004917.1"/>
</dbReference>
<dbReference type="SMR" id="Q7VJ78"/>
<dbReference type="STRING" id="235279.HH_0365"/>
<dbReference type="KEGG" id="hhe:HH_0365"/>
<dbReference type="eggNOG" id="COG0080">
    <property type="taxonomic scope" value="Bacteria"/>
</dbReference>
<dbReference type="HOGENOM" id="CLU_074237_2_0_7"/>
<dbReference type="OrthoDB" id="9802408at2"/>
<dbReference type="Proteomes" id="UP000002495">
    <property type="component" value="Chromosome"/>
</dbReference>
<dbReference type="GO" id="GO:0022625">
    <property type="term" value="C:cytosolic large ribosomal subunit"/>
    <property type="evidence" value="ECO:0007669"/>
    <property type="project" value="TreeGrafter"/>
</dbReference>
<dbReference type="GO" id="GO:0070180">
    <property type="term" value="F:large ribosomal subunit rRNA binding"/>
    <property type="evidence" value="ECO:0007669"/>
    <property type="project" value="UniProtKB-UniRule"/>
</dbReference>
<dbReference type="GO" id="GO:0003735">
    <property type="term" value="F:structural constituent of ribosome"/>
    <property type="evidence" value="ECO:0007669"/>
    <property type="project" value="InterPro"/>
</dbReference>
<dbReference type="GO" id="GO:0006412">
    <property type="term" value="P:translation"/>
    <property type="evidence" value="ECO:0007669"/>
    <property type="project" value="UniProtKB-UniRule"/>
</dbReference>
<dbReference type="CDD" id="cd00349">
    <property type="entry name" value="Ribosomal_L11"/>
    <property type="match status" value="1"/>
</dbReference>
<dbReference type="FunFam" id="1.10.10.250:FF:000001">
    <property type="entry name" value="50S ribosomal protein L11"/>
    <property type="match status" value="1"/>
</dbReference>
<dbReference type="FunFam" id="3.30.1550.10:FF:000001">
    <property type="entry name" value="50S ribosomal protein L11"/>
    <property type="match status" value="1"/>
</dbReference>
<dbReference type="Gene3D" id="1.10.10.250">
    <property type="entry name" value="Ribosomal protein L11, C-terminal domain"/>
    <property type="match status" value="1"/>
</dbReference>
<dbReference type="Gene3D" id="3.30.1550.10">
    <property type="entry name" value="Ribosomal protein L11/L12, N-terminal domain"/>
    <property type="match status" value="1"/>
</dbReference>
<dbReference type="HAMAP" id="MF_00736">
    <property type="entry name" value="Ribosomal_uL11"/>
    <property type="match status" value="1"/>
</dbReference>
<dbReference type="InterPro" id="IPR000911">
    <property type="entry name" value="Ribosomal_uL11"/>
</dbReference>
<dbReference type="InterPro" id="IPR006519">
    <property type="entry name" value="Ribosomal_uL11_bac-typ"/>
</dbReference>
<dbReference type="InterPro" id="IPR020783">
    <property type="entry name" value="Ribosomal_uL11_C"/>
</dbReference>
<dbReference type="InterPro" id="IPR036769">
    <property type="entry name" value="Ribosomal_uL11_C_sf"/>
</dbReference>
<dbReference type="InterPro" id="IPR020785">
    <property type="entry name" value="Ribosomal_uL11_CS"/>
</dbReference>
<dbReference type="InterPro" id="IPR020784">
    <property type="entry name" value="Ribosomal_uL11_N"/>
</dbReference>
<dbReference type="InterPro" id="IPR036796">
    <property type="entry name" value="Ribosomal_uL11_N_sf"/>
</dbReference>
<dbReference type="NCBIfam" id="TIGR01632">
    <property type="entry name" value="L11_bact"/>
    <property type="match status" value="1"/>
</dbReference>
<dbReference type="PANTHER" id="PTHR11661">
    <property type="entry name" value="60S RIBOSOMAL PROTEIN L12"/>
    <property type="match status" value="1"/>
</dbReference>
<dbReference type="PANTHER" id="PTHR11661:SF1">
    <property type="entry name" value="LARGE RIBOSOMAL SUBUNIT PROTEIN UL11M"/>
    <property type="match status" value="1"/>
</dbReference>
<dbReference type="Pfam" id="PF00298">
    <property type="entry name" value="Ribosomal_L11"/>
    <property type="match status" value="1"/>
</dbReference>
<dbReference type="Pfam" id="PF03946">
    <property type="entry name" value="Ribosomal_L11_N"/>
    <property type="match status" value="1"/>
</dbReference>
<dbReference type="SMART" id="SM00649">
    <property type="entry name" value="RL11"/>
    <property type="match status" value="1"/>
</dbReference>
<dbReference type="SUPFAM" id="SSF54747">
    <property type="entry name" value="Ribosomal L11/L12e N-terminal domain"/>
    <property type="match status" value="1"/>
</dbReference>
<dbReference type="SUPFAM" id="SSF46906">
    <property type="entry name" value="Ribosomal protein L11, C-terminal domain"/>
    <property type="match status" value="1"/>
</dbReference>
<dbReference type="PROSITE" id="PS00359">
    <property type="entry name" value="RIBOSOMAL_L11"/>
    <property type="match status" value="1"/>
</dbReference>
<organism>
    <name type="scientific">Helicobacter hepaticus (strain ATCC 51449 / 3B1)</name>
    <dbReference type="NCBI Taxonomy" id="235279"/>
    <lineage>
        <taxon>Bacteria</taxon>
        <taxon>Pseudomonadati</taxon>
        <taxon>Campylobacterota</taxon>
        <taxon>Epsilonproteobacteria</taxon>
        <taxon>Campylobacterales</taxon>
        <taxon>Helicobacteraceae</taxon>
        <taxon>Helicobacter</taxon>
    </lineage>
</organism>